<sequence>MKALKDFMRMKHEGEKISMLTAYDYPSAKQAEAAEIDMILVGDSLGMTVLGYESTVDVTLDDMKHHARAVRRGAKDTYVVVDMPFGTIGIDASTDTAFAIELYRDTHANAIKIEGAHAAPVIKKCHDIGIPVVAHLGLTPQSYGITGYQLQATSKEAAKQLIEDAKLVEKSGAIMLVLEAIPSDLAHVITESLTIPVIGIGAGVGTNGQVLVYHDVLNYGVEHKPKFVKRYGDFSIGVESIKNFHDEVKRQAFPTEEYTYKKQIMNEVDE</sequence>
<feature type="chain" id="PRO_0000184870" description="3-methyl-2-oxobutanoate hydroxymethyltransferase">
    <location>
        <begin position="1"/>
        <end position="270"/>
    </location>
</feature>
<feature type="active site" description="Proton acceptor" evidence="1">
    <location>
        <position position="179"/>
    </location>
</feature>
<feature type="binding site" evidence="1">
    <location>
        <begin position="43"/>
        <end position="44"/>
    </location>
    <ligand>
        <name>3-methyl-2-oxobutanoate</name>
        <dbReference type="ChEBI" id="CHEBI:11851"/>
    </ligand>
</feature>
<feature type="binding site" evidence="1">
    <location>
        <position position="43"/>
    </location>
    <ligand>
        <name>Mg(2+)</name>
        <dbReference type="ChEBI" id="CHEBI:18420"/>
    </ligand>
</feature>
<feature type="binding site" evidence="1">
    <location>
        <position position="82"/>
    </location>
    <ligand>
        <name>3-methyl-2-oxobutanoate</name>
        <dbReference type="ChEBI" id="CHEBI:11851"/>
    </ligand>
</feature>
<feature type="binding site" evidence="1">
    <location>
        <position position="82"/>
    </location>
    <ligand>
        <name>Mg(2+)</name>
        <dbReference type="ChEBI" id="CHEBI:18420"/>
    </ligand>
</feature>
<feature type="binding site" evidence="1">
    <location>
        <position position="112"/>
    </location>
    <ligand>
        <name>3-methyl-2-oxobutanoate</name>
        <dbReference type="ChEBI" id="CHEBI:11851"/>
    </ligand>
</feature>
<feature type="binding site" evidence="1">
    <location>
        <position position="114"/>
    </location>
    <ligand>
        <name>Mg(2+)</name>
        <dbReference type="ChEBI" id="CHEBI:18420"/>
    </ligand>
</feature>
<proteinExistence type="inferred from homology"/>
<gene>
    <name evidence="1" type="primary">panB</name>
    <name type="ordered locus">OB3274</name>
</gene>
<protein>
    <recommendedName>
        <fullName evidence="1">3-methyl-2-oxobutanoate hydroxymethyltransferase</fullName>
        <ecNumber evidence="1">2.1.2.11</ecNumber>
    </recommendedName>
    <alternativeName>
        <fullName evidence="1">Ketopantoate hydroxymethyltransferase</fullName>
        <shortName evidence="1">KPHMT</shortName>
    </alternativeName>
</protein>
<name>PANB_OCEIH</name>
<accession>Q8ELF4</accession>
<reference key="1">
    <citation type="journal article" date="2002" name="Nucleic Acids Res.">
        <title>Genome sequence of Oceanobacillus iheyensis isolated from the Iheya Ridge and its unexpected adaptive capabilities to extreme environments.</title>
        <authorList>
            <person name="Takami H."/>
            <person name="Takaki Y."/>
            <person name="Uchiyama I."/>
        </authorList>
    </citation>
    <scope>NUCLEOTIDE SEQUENCE [LARGE SCALE GENOMIC DNA]</scope>
    <source>
        <strain>DSM 14371 / CIP 107618 / JCM 11309 / KCTC 3954 / HTE831</strain>
    </source>
</reference>
<comment type="function">
    <text evidence="1">Catalyzes the reversible reaction in which hydroxymethyl group from 5,10-methylenetetrahydrofolate is transferred onto alpha-ketoisovalerate to form ketopantoate.</text>
</comment>
<comment type="catalytic activity">
    <reaction evidence="1">
        <text>3-methyl-2-oxobutanoate + (6R)-5,10-methylene-5,6,7,8-tetrahydrofolate + H2O = 2-dehydropantoate + (6S)-5,6,7,8-tetrahydrofolate</text>
        <dbReference type="Rhea" id="RHEA:11824"/>
        <dbReference type="ChEBI" id="CHEBI:11561"/>
        <dbReference type="ChEBI" id="CHEBI:11851"/>
        <dbReference type="ChEBI" id="CHEBI:15377"/>
        <dbReference type="ChEBI" id="CHEBI:15636"/>
        <dbReference type="ChEBI" id="CHEBI:57453"/>
        <dbReference type="EC" id="2.1.2.11"/>
    </reaction>
</comment>
<comment type="cofactor">
    <cofactor evidence="1">
        <name>Mg(2+)</name>
        <dbReference type="ChEBI" id="CHEBI:18420"/>
    </cofactor>
    <text evidence="1">Binds 1 Mg(2+) ion per subunit.</text>
</comment>
<comment type="pathway">
    <text evidence="1">Cofactor biosynthesis; (R)-pantothenate biosynthesis; (R)-pantoate from 3-methyl-2-oxobutanoate: step 1/2.</text>
</comment>
<comment type="subunit">
    <text evidence="1">Homodecamer; pentamer of dimers.</text>
</comment>
<comment type="subcellular location">
    <subcellularLocation>
        <location evidence="1">Cytoplasm</location>
    </subcellularLocation>
</comment>
<comment type="similarity">
    <text evidence="1">Belongs to the PanB family.</text>
</comment>
<evidence type="ECO:0000255" key="1">
    <source>
        <dbReference type="HAMAP-Rule" id="MF_00156"/>
    </source>
</evidence>
<organism>
    <name type="scientific">Oceanobacillus iheyensis (strain DSM 14371 / CIP 107618 / JCM 11309 / KCTC 3954 / HTE831)</name>
    <dbReference type="NCBI Taxonomy" id="221109"/>
    <lineage>
        <taxon>Bacteria</taxon>
        <taxon>Bacillati</taxon>
        <taxon>Bacillota</taxon>
        <taxon>Bacilli</taxon>
        <taxon>Bacillales</taxon>
        <taxon>Bacillaceae</taxon>
        <taxon>Oceanobacillus</taxon>
    </lineage>
</organism>
<dbReference type="EC" id="2.1.2.11" evidence="1"/>
<dbReference type="EMBL" id="BA000028">
    <property type="protein sequence ID" value="BAC15230.1"/>
    <property type="molecule type" value="Genomic_DNA"/>
</dbReference>
<dbReference type="RefSeq" id="WP_011067670.1">
    <property type="nucleotide sequence ID" value="NC_004193.1"/>
</dbReference>
<dbReference type="SMR" id="Q8ELF4"/>
<dbReference type="STRING" id="221109.gene:10735526"/>
<dbReference type="KEGG" id="oih:OB3274"/>
<dbReference type="eggNOG" id="COG0413">
    <property type="taxonomic scope" value="Bacteria"/>
</dbReference>
<dbReference type="HOGENOM" id="CLU_036645_1_0_9"/>
<dbReference type="OrthoDB" id="9781789at2"/>
<dbReference type="PhylomeDB" id="Q8ELF4"/>
<dbReference type="UniPathway" id="UPA00028">
    <property type="reaction ID" value="UER00003"/>
</dbReference>
<dbReference type="Proteomes" id="UP000000822">
    <property type="component" value="Chromosome"/>
</dbReference>
<dbReference type="GO" id="GO:0005737">
    <property type="term" value="C:cytoplasm"/>
    <property type="evidence" value="ECO:0007669"/>
    <property type="project" value="UniProtKB-SubCell"/>
</dbReference>
<dbReference type="GO" id="GO:0003864">
    <property type="term" value="F:3-methyl-2-oxobutanoate hydroxymethyltransferase activity"/>
    <property type="evidence" value="ECO:0007669"/>
    <property type="project" value="UniProtKB-UniRule"/>
</dbReference>
<dbReference type="GO" id="GO:0000287">
    <property type="term" value="F:magnesium ion binding"/>
    <property type="evidence" value="ECO:0007669"/>
    <property type="project" value="TreeGrafter"/>
</dbReference>
<dbReference type="GO" id="GO:0015940">
    <property type="term" value="P:pantothenate biosynthetic process"/>
    <property type="evidence" value="ECO:0007669"/>
    <property type="project" value="UniProtKB-UniRule"/>
</dbReference>
<dbReference type="CDD" id="cd06557">
    <property type="entry name" value="KPHMT-like"/>
    <property type="match status" value="1"/>
</dbReference>
<dbReference type="FunFam" id="3.20.20.60:FF:000003">
    <property type="entry name" value="3-methyl-2-oxobutanoate hydroxymethyltransferase"/>
    <property type="match status" value="1"/>
</dbReference>
<dbReference type="Gene3D" id="3.20.20.60">
    <property type="entry name" value="Phosphoenolpyruvate-binding domains"/>
    <property type="match status" value="1"/>
</dbReference>
<dbReference type="HAMAP" id="MF_00156">
    <property type="entry name" value="PanB"/>
    <property type="match status" value="1"/>
</dbReference>
<dbReference type="InterPro" id="IPR003700">
    <property type="entry name" value="Pantoate_hydroxy_MeTrfase"/>
</dbReference>
<dbReference type="InterPro" id="IPR015813">
    <property type="entry name" value="Pyrv/PenolPyrv_kinase-like_dom"/>
</dbReference>
<dbReference type="InterPro" id="IPR040442">
    <property type="entry name" value="Pyrv_kinase-like_dom_sf"/>
</dbReference>
<dbReference type="NCBIfam" id="TIGR00222">
    <property type="entry name" value="panB"/>
    <property type="match status" value="1"/>
</dbReference>
<dbReference type="NCBIfam" id="NF001452">
    <property type="entry name" value="PRK00311.1"/>
    <property type="match status" value="1"/>
</dbReference>
<dbReference type="PANTHER" id="PTHR20881">
    <property type="entry name" value="3-METHYL-2-OXOBUTANOATE HYDROXYMETHYLTRANSFERASE"/>
    <property type="match status" value="1"/>
</dbReference>
<dbReference type="PANTHER" id="PTHR20881:SF0">
    <property type="entry name" value="3-METHYL-2-OXOBUTANOATE HYDROXYMETHYLTRANSFERASE"/>
    <property type="match status" value="1"/>
</dbReference>
<dbReference type="Pfam" id="PF02548">
    <property type="entry name" value="Pantoate_transf"/>
    <property type="match status" value="1"/>
</dbReference>
<dbReference type="PIRSF" id="PIRSF000388">
    <property type="entry name" value="Pantoate_hydroxy_MeTrfase"/>
    <property type="match status" value="1"/>
</dbReference>
<dbReference type="SUPFAM" id="SSF51621">
    <property type="entry name" value="Phosphoenolpyruvate/pyruvate domain"/>
    <property type="match status" value="1"/>
</dbReference>
<keyword id="KW-0963">Cytoplasm</keyword>
<keyword id="KW-0460">Magnesium</keyword>
<keyword id="KW-0479">Metal-binding</keyword>
<keyword id="KW-0566">Pantothenate biosynthesis</keyword>
<keyword id="KW-1185">Reference proteome</keyword>
<keyword id="KW-0808">Transferase</keyword>